<gene>
    <name type="primary">MT-CYB</name>
    <name type="synonym">COB</name>
    <name type="synonym">CYTB</name>
    <name type="synonym">MTCYB</name>
</gene>
<evidence type="ECO:0000250" key="1"/>
<evidence type="ECO:0000250" key="2">
    <source>
        <dbReference type="UniProtKB" id="P00157"/>
    </source>
</evidence>
<evidence type="ECO:0000255" key="3">
    <source>
        <dbReference type="PROSITE-ProRule" id="PRU00968"/>
    </source>
</evidence>
<reference key="1">
    <citation type="journal article" date="1994" name="J. Mammal.">
        <title>Familial affinity of Tomopeas ravus (Chiroptera) based on protein electrophoretic and cytochrome b sequence data.</title>
        <authorList>
            <person name="Sudman P.D."/>
            <person name="Barkley L.J."/>
            <person name="Hafner M.S."/>
        </authorList>
    </citation>
    <scope>NUCLEOTIDE SEQUENCE [GENOMIC DNA]</scope>
    <source>
        <strain>Isolate LSUMZ 22048</strain>
        <tissue>Kidney</tissue>
        <tissue>Liver</tissue>
    </source>
</reference>
<accession>Q33607</accession>
<proteinExistence type="inferred from homology"/>
<sequence length="176" mass="19801">MTNIRKSHPLLKIINNSFIDLPAPSNISSWWNFGSLLGICLALQILTGIFLAMHYTSDTATAFNSVTHICRDVNYGWVLRYLHANGASMFFICLYLHVGRGLYYGSYMYKETWNMGVILLFAVMATAFMGYVLPWGQMSFWGATVITNLLSAIPYIGTDLVEWIWGGFSVDKATLT</sequence>
<protein>
    <recommendedName>
        <fullName>Cytochrome b</fullName>
    </recommendedName>
    <alternativeName>
        <fullName>Complex III subunit 3</fullName>
    </alternativeName>
    <alternativeName>
        <fullName>Complex III subunit III</fullName>
    </alternativeName>
    <alternativeName>
        <fullName>Cytochrome b-c1 complex subunit 3</fullName>
    </alternativeName>
    <alternativeName>
        <fullName>Ubiquinol-cytochrome-c reductase complex cytochrome b subunit</fullName>
    </alternativeName>
</protein>
<comment type="function">
    <text evidence="2">Component of the ubiquinol-cytochrome c reductase complex (complex III or cytochrome b-c1 complex) that is part of the mitochondrial respiratory chain. The b-c1 complex mediates electron transfer from ubiquinol to cytochrome c. Contributes to the generation of a proton gradient across the mitochondrial membrane that is then used for ATP synthesis.</text>
</comment>
<comment type="cofactor">
    <cofactor evidence="2">
        <name>heme b</name>
        <dbReference type="ChEBI" id="CHEBI:60344"/>
    </cofactor>
    <text evidence="2">Binds 2 heme b groups non-covalently.</text>
</comment>
<comment type="subunit">
    <text evidence="2">The cytochrome bc1 complex contains 11 subunits: 3 respiratory subunits (MT-CYB, CYC1 and UQCRFS1), 2 core proteins (UQCRC1 and UQCRC2) and 6 low-molecular weight proteins (UQCRH/QCR6, UQCRB/QCR7, UQCRQ/QCR8, UQCR10/QCR9, UQCR11/QCR10 and a cleavage product of UQCRFS1). This cytochrome bc1 complex then forms a dimer.</text>
</comment>
<comment type="subcellular location">
    <subcellularLocation>
        <location evidence="2">Mitochondrion inner membrane</location>
        <topology evidence="2">Multi-pass membrane protein</topology>
    </subcellularLocation>
</comment>
<comment type="miscellaneous">
    <text evidence="1">Heme 1 (or BL or b562) is low-potential and absorbs at about 562 nm, and heme 2 (or BH or b566) is high-potential and absorbs at about 566 nm.</text>
</comment>
<comment type="similarity">
    <text evidence="3">Belongs to the cytochrome b family.</text>
</comment>
<comment type="caution">
    <text evidence="2">The full-length protein contains only eight transmembrane helices, not nine as predicted by bioinformatics tools.</text>
</comment>
<name>CYB_LASNO</name>
<organism>
    <name type="scientific">Lasionycteris noctivagans</name>
    <name type="common">Silver-haired bat</name>
    <dbReference type="NCBI Taxonomy" id="27667"/>
    <lineage>
        <taxon>Eukaryota</taxon>
        <taxon>Metazoa</taxon>
        <taxon>Chordata</taxon>
        <taxon>Craniata</taxon>
        <taxon>Vertebrata</taxon>
        <taxon>Euteleostomi</taxon>
        <taxon>Mammalia</taxon>
        <taxon>Eutheria</taxon>
        <taxon>Laurasiatheria</taxon>
        <taxon>Chiroptera</taxon>
        <taxon>Yangochiroptera</taxon>
        <taxon>Vespertilionidae</taxon>
        <taxon>Lasionycteris</taxon>
    </lineage>
</organism>
<feature type="chain" id="PRO_0000061091" description="Cytochrome b">
    <location>
        <begin position="1"/>
        <end position="176" status="greater than"/>
    </location>
</feature>
<feature type="transmembrane region" description="Helical" evidence="2">
    <location>
        <begin position="33"/>
        <end position="53"/>
    </location>
</feature>
<feature type="transmembrane region" description="Helical" evidence="2">
    <location>
        <begin position="77"/>
        <end position="98"/>
    </location>
</feature>
<feature type="transmembrane region" description="Helical" evidence="2">
    <location>
        <begin position="113"/>
        <end position="133"/>
    </location>
</feature>
<feature type="binding site" description="axial binding residue" evidence="2">
    <location>
        <position position="83"/>
    </location>
    <ligand>
        <name>heme b</name>
        <dbReference type="ChEBI" id="CHEBI:60344"/>
        <label>b562</label>
    </ligand>
    <ligandPart>
        <name>Fe</name>
        <dbReference type="ChEBI" id="CHEBI:18248"/>
    </ligandPart>
</feature>
<feature type="binding site" description="axial binding residue" evidence="2">
    <location>
        <position position="97"/>
    </location>
    <ligand>
        <name>heme b</name>
        <dbReference type="ChEBI" id="CHEBI:60344"/>
        <label>b566</label>
    </ligand>
    <ligandPart>
        <name>Fe</name>
        <dbReference type="ChEBI" id="CHEBI:18248"/>
    </ligandPart>
</feature>
<feature type="non-terminal residue">
    <location>
        <position position="176"/>
    </location>
</feature>
<geneLocation type="mitochondrion"/>
<keyword id="KW-0249">Electron transport</keyword>
<keyword id="KW-0349">Heme</keyword>
<keyword id="KW-0408">Iron</keyword>
<keyword id="KW-0472">Membrane</keyword>
<keyword id="KW-0479">Metal-binding</keyword>
<keyword id="KW-0496">Mitochondrion</keyword>
<keyword id="KW-0999">Mitochondrion inner membrane</keyword>
<keyword id="KW-0679">Respiratory chain</keyword>
<keyword id="KW-0812">Transmembrane</keyword>
<keyword id="KW-1133">Transmembrane helix</keyword>
<keyword id="KW-0813">Transport</keyword>
<keyword id="KW-0830">Ubiquinone</keyword>
<dbReference type="EMBL" id="L19723">
    <property type="protein sequence ID" value="AAA17769.1"/>
    <property type="molecule type" value="Genomic_DNA"/>
</dbReference>
<dbReference type="SMR" id="Q33607"/>
<dbReference type="GO" id="GO:0005743">
    <property type="term" value="C:mitochondrial inner membrane"/>
    <property type="evidence" value="ECO:0007669"/>
    <property type="project" value="UniProtKB-SubCell"/>
</dbReference>
<dbReference type="GO" id="GO:0046872">
    <property type="term" value="F:metal ion binding"/>
    <property type="evidence" value="ECO:0007669"/>
    <property type="project" value="UniProtKB-KW"/>
</dbReference>
<dbReference type="GO" id="GO:0008121">
    <property type="term" value="F:ubiquinol-cytochrome-c reductase activity"/>
    <property type="evidence" value="ECO:0007669"/>
    <property type="project" value="TreeGrafter"/>
</dbReference>
<dbReference type="GO" id="GO:0006122">
    <property type="term" value="P:mitochondrial electron transport, ubiquinol to cytochrome c"/>
    <property type="evidence" value="ECO:0007669"/>
    <property type="project" value="TreeGrafter"/>
</dbReference>
<dbReference type="CDD" id="cd00284">
    <property type="entry name" value="Cytochrome_b_N"/>
    <property type="match status" value="1"/>
</dbReference>
<dbReference type="Gene3D" id="1.20.810.10">
    <property type="entry name" value="Cytochrome Bc1 Complex, Chain C"/>
    <property type="match status" value="1"/>
</dbReference>
<dbReference type="InterPro" id="IPR005797">
    <property type="entry name" value="Cyt_b/b6_N"/>
</dbReference>
<dbReference type="InterPro" id="IPR027387">
    <property type="entry name" value="Cytb/b6-like_sf"/>
</dbReference>
<dbReference type="InterPro" id="IPR048259">
    <property type="entry name" value="Cytochrome_b_N_euk/bac"/>
</dbReference>
<dbReference type="InterPro" id="IPR016174">
    <property type="entry name" value="Di-haem_cyt_TM"/>
</dbReference>
<dbReference type="PANTHER" id="PTHR19271">
    <property type="entry name" value="CYTOCHROME B"/>
    <property type="match status" value="1"/>
</dbReference>
<dbReference type="PANTHER" id="PTHR19271:SF16">
    <property type="entry name" value="CYTOCHROME B"/>
    <property type="match status" value="1"/>
</dbReference>
<dbReference type="Pfam" id="PF00033">
    <property type="entry name" value="Cytochrome_B"/>
    <property type="match status" value="1"/>
</dbReference>
<dbReference type="SUPFAM" id="SSF81342">
    <property type="entry name" value="Transmembrane di-heme cytochromes"/>
    <property type="match status" value="1"/>
</dbReference>
<dbReference type="PROSITE" id="PS51002">
    <property type="entry name" value="CYTB_NTER"/>
    <property type="match status" value="1"/>
</dbReference>